<reference key="1">
    <citation type="journal article" date="2011" name="Toxicon">
        <title>Diversity of conotoxin types from Conus californicus reflects a diversity of prey types and a novel evolutionary history.</title>
        <authorList>
            <person name="Elliger C.A."/>
            <person name="Richmond T.A."/>
            <person name="Lebaric Z.N."/>
            <person name="Pierce N.T."/>
            <person name="Sweedler J.V."/>
            <person name="Gilly W.F."/>
        </authorList>
    </citation>
    <scope>NUCLEOTIDE SEQUENCE [MRNA]</scope>
    <scope>PROTEIN SEQUENCE OF 42-64</scope>
    <scope>HYDROXYLATION AT PRO-49</scope>
    <scope>BROMINATION AT TRP-44</scope>
    <scope>SUBCELLULAR LOCATION</scope>
    <source>
        <tissue>Venom</tissue>
        <tissue>Venom duct</tissue>
    </source>
</reference>
<organism>
    <name type="scientific">Californiconus californicus</name>
    <name type="common">California cone</name>
    <name type="synonym">Conus californicus</name>
    <dbReference type="NCBI Taxonomy" id="1736779"/>
    <lineage>
        <taxon>Eukaryota</taxon>
        <taxon>Metazoa</taxon>
        <taxon>Spiralia</taxon>
        <taxon>Lophotrochozoa</taxon>
        <taxon>Mollusca</taxon>
        <taxon>Gastropoda</taxon>
        <taxon>Caenogastropoda</taxon>
        <taxon>Neogastropoda</taxon>
        <taxon>Conoidea</taxon>
        <taxon>Conidae</taxon>
        <taxon>Californiconus</taxon>
    </lineage>
</organism>
<dbReference type="EMBL" id="GU591494">
    <property type="protein sequence ID" value="ADD97802.1"/>
    <property type="molecule type" value="mRNA"/>
</dbReference>
<dbReference type="ConoServer" id="4057">
    <property type="toxin name" value="Cal6.4 precursor"/>
</dbReference>
<dbReference type="GO" id="GO:0005576">
    <property type="term" value="C:extracellular region"/>
    <property type="evidence" value="ECO:0007669"/>
    <property type="project" value="UniProtKB-SubCell"/>
</dbReference>
<dbReference type="GO" id="GO:0099106">
    <property type="term" value="F:ion channel regulator activity"/>
    <property type="evidence" value="ECO:0007669"/>
    <property type="project" value="UniProtKB-KW"/>
</dbReference>
<dbReference type="GO" id="GO:0090729">
    <property type="term" value="F:toxin activity"/>
    <property type="evidence" value="ECO:0007669"/>
    <property type="project" value="UniProtKB-KW"/>
</dbReference>
<evidence type="ECO:0000250" key="1"/>
<evidence type="ECO:0000255" key="2"/>
<evidence type="ECO:0000269" key="3">
    <source>
    </source>
</evidence>
<evidence type="ECO:0000303" key="4">
    <source>
    </source>
</evidence>
<evidence type="ECO:0000305" key="5"/>
<evidence type="ECO:0000305" key="6">
    <source>
    </source>
</evidence>
<name>O164_CONCL</name>
<protein>
    <recommendedName>
        <fullName evidence="4">Conotoxin cal6.4a</fullName>
    </recommendedName>
    <alternativeName>
        <fullName evidence="4">Conotoxin cal6.4c</fullName>
    </alternativeName>
</protein>
<accession>D5KR58</accession>
<sequence length="64" mass="7111">MKLTCVLIVAVLILTACQFTAADDMEYPKWLRGLSTDXSERGCWLCLGPNACCRGSVCHDYCPR</sequence>
<keyword id="KW-0102">Bromination</keyword>
<keyword id="KW-0903">Direct protein sequencing</keyword>
<keyword id="KW-1015">Disulfide bond</keyword>
<keyword id="KW-0379">Hydroxylation</keyword>
<keyword id="KW-0872">Ion channel impairing toxin</keyword>
<keyword id="KW-0960">Knottin</keyword>
<keyword id="KW-0528">Neurotoxin</keyword>
<keyword id="KW-0964">Secreted</keyword>
<keyword id="KW-0732">Signal</keyword>
<keyword id="KW-0800">Toxin</keyword>
<comment type="function">
    <text evidence="5">Probable neurotoxin with unknown target. Possibly targets ion channels.</text>
</comment>
<comment type="subcellular location">
    <subcellularLocation>
        <location evidence="3">Secreted</location>
    </subcellularLocation>
</comment>
<comment type="tissue specificity">
    <text evidence="6">Expressed by the venom duct.</text>
</comment>
<comment type="domain">
    <text evidence="1">The presence of a 'disulfide through disulfide knot' structurally defines this protein as a knottin.</text>
</comment>
<comment type="domain">
    <text>The cysteine framework is VI/VII (C-C-CC-C-C).</text>
</comment>
<comment type="PTM">
    <text evidence="3">Five different peptides have been sequenced after total venom examination by HPLC-MS. cal6.4a-4c are identical in length but are differentially hydroxylated and brominated.</text>
</comment>
<comment type="similarity">
    <text evidence="5">Belongs to the conotoxin O1 superfamily.</text>
</comment>
<feature type="signal peptide" evidence="2">
    <location>
        <begin position="1"/>
        <end position="22"/>
    </location>
</feature>
<feature type="propeptide" id="PRO_5000585094" evidence="6">
    <location>
        <begin position="23"/>
        <end position="64"/>
    </location>
</feature>
<feature type="peptide" id="PRO_5000585095" description="Conotoxin cal6.4a" evidence="3">
    <location>
        <begin position="42"/>
        <end position="64"/>
    </location>
</feature>
<feature type="modified residue" description="6'-bromotryptophan; in form cal6.4c" evidence="3">
    <location>
        <position position="44"/>
    </location>
</feature>
<feature type="modified residue" description="4-hydroxyproline; in form cal6.4b, and form cal6.4c" evidence="3">
    <location>
        <position position="49"/>
    </location>
</feature>
<feature type="disulfide bond" evidence="1">
    <location>
        <begin position="43"/>
        <end position="53"/>
    </location>
</feature>
<feature type="disulfide bond" evidence="1">
    <location>
        <begin position="46"/>
        <end position="58"/>
    </location>
</feature>
<feature type="disulfide bond" evidence="1">
    <location>
        <begin position="52"/>
        <end position="62"/>
    </location>
</feature>
<feature type="sequence variant" description="In cal6.4b and cal6.4c.">
    <original>R</original>
    <variation>S</variation>
    <location>
        <position position="64"/>
    </location>
</feature>
<proteinExistence type="evidence at protein level"/>